<keyword id="KW-1003">Cell membrane</keyword>
<keyword id="KW-0184">Conjugation</keyword>
<keyword id="KW-0472">Membrane</keyword>
<keyword id="KW-0614">Plasmid</keyword>
<keyword id="KW-1185">Reference proteome</keyword>
<keyword id="KW-0812">Transmembrane</keyword>
<keyword id="KW-1133">Transmembrane helix</keyword>
<evidence type="ECO:0000255" key="1"/>
<evidence type="ECO:0000256" key="2">
    <source>
        <dbReference type="SAM" id="MobiDB-lite"/>
    </source>
</evidence>
<evidence type="ECO:0000305" key="3"/>
<geneLocation type="plasmid">
    <name>sym pNGR234a</name>
</geneLocation>
<protein>
    <recommendedName>
        <fullName>Probable conjugal transfer protein TrbL</fullName>
    </recommendedName>
</protein>
<organism>
    <name type="scientific">Sinorhizobium fredii (strain NBRC 101917 / NGR234)</name>
    <dbReference type="NCBI Taxonomy" id="394"/>
    <lineage>
        <taxon>Bacteria</taxon>
        <taxon>Pseudomonadati</taxon>
        <taxon>Pseudomonadota</taxon>
        <taxon>Alphaproteobacteria</taxon>
        <taxon>Hyphomicrobiales</taxon>
        <taxon>Rhizobiaceae</taxon>
        <taxon>Sinorhizobium/Ensifer group</taxon>
        <taxon>Sinorhizobium</taxon>
    </lineage>
</organism>
<sequence>MVKISLARSLLIAGLAYVAFEARAFAQEGLVLTELENHVSAAAKGWETTILDAAKSLFWILATIEIGIAAVWLALQAASLDSWFAELVRRIMFVGFFAFVLTQGPTFARAVIDSLFQIGAGGGSASPAEIFDAGIRVASQMSQQAQFGVFEDNALAIAAVLAMGVVVICFSLVAAIFVSVMVEMYVGLLAGMIMLGLGGSSFTKDFAVRYLVYAFGVGMKLMALVMIAKIGSQVLLGLANAPTASSDQFVTTLAIAGISVVVFIIAMYVPSIIQGVVQGASVSGGMETIRHGGQAASFAAGAGFLAGGAARTGFTAGQSARAAGSSLAGAALRGFGAGIGSASSAAGSAAKEKAIGSPGAYAGSILGLANAKLDESRGGHSGHKPPPERKD</sequence>
<reference key="1">
    <citation type="journal article" date="1997" name="Nature">
        <title>Molecular basis of symbiosis between Rhizobium and legumes.</title>
        <authorList>
            <person name="Freiberg C.A."/>
            <person name="Fellay R."/>
            <person name="Bairoch A."/>
            <person name="Broughton W.J."/>
            <person name="Rosenthal A."/>
            <person name="Perret X."/>
        </authorList>
    </citation>
    <scope>NUCLEOTIDE SEQUENCE [LARGE SCALE GENOMIC DNA]</scope>
    <source>
        <strain>NBRC 101917 / NGR234</strain>
    </source>
</reference>
<reference key="2">
    <citation type="journal article" date="2009" name="Appl. Environ. Microbiol.">
        <title>Rhizobium sp. strain NGR234 possesses a remarkable number of secretion systems.</title>
        <authorList>
            <person name="Schmeisser C."/>
            <person name="Liesegang H."/>
            <person name="Krysciak D."/>
            <person name="Bakkou N."/>
            <person name="Le Quere A."/>
            <person name="Wollherr A."/>
            <person name="Heinemeyer I."/>
            <person name="Morgenstern B."/>
            <person name="Pommerening-Roeser A."/>
            <person name="Flores M."/>
            <person name="Palacios R."/>
            <person name="Brenner S."/>
            <person name="Gottschalk G."/>
            <person name="Schmitz R.A."/>
            <person name="Broughton W.J."/>
            <person name="Perret X."/>
            <person name="Strittmatter A.W."/>
            <person name="Streit W.R."/>
        </authorList>
    </citation>
    <scope>NUCLEOTIDE SEQUENCE [LARGE SCALE GENOMIC DNA]</scope>
    <source>
        <strain>NBRC 101917 / NGR234</strain>
    </source>
</reference>
<gene>
    <name type="primary">trbL</name>
    <name type="ordered locus">NGR_a04140</name>
    <name type="ORF">y4dC</name>
</gene>
<accession>P55402</accession>
<name>TRBL_SINFN</name>
<feature type="chain" id="PRO_0000065621" description="Probable conjugal transfer protein TrbL">
    <location>
        <begin position="1"/>
        <end position="391"/>
    </location>
</feature>
<feature type="transmembrane region" description="Helical" evidence="1">
    <location>
        <begin position="12"/>
        <end position="32"/>
    </location>
</feature>
<feature type="transmembrane region" description="Helical" evidence="1">
    <location>
        <begin position="57"/>
        <end position="77"/>
    </location>
</feature>
<feature type="transmembrane region" description="Helical" evidence="1">
    <location>
        <begin position="92"/>
        <end position="112"/>
    </location>
</feature>
<feature type="transmembrane region" description="Helical" evidence="1">
    <location>
        <begin position="115"/>
        <end position="135"/>
    </location>
</feature>
<feature type="transmembrane region" description="Helical" evidence="1">
    <location>
        <begin position="157"/>
        <end position="177"/>
    </location>
</feature>
<feature type="transmembrane region" description="Helical" evidence="1">
    <location>
        <begin position="178"/>
        <end position="198"/>
    </location>
</feature>
<feature type="transmembrane region" description="Helical" evidence="1">
    <location>
        <begin position="211"/>
        <end position="231"/>
    </location>
</feature>
<feature type="transmembrane region" description="Helical" evidence="1">
    <location>
        <begin position="253"/>
        <end position="273"/>
    </location>
</feature>
<feature type="transmembrane region" description="Helical" evidence="1">
    <location>
        <begin position="295"/>
        <end position="315"/>
    </location>
</feature>
<feature type="transmembrane region" description="Helical" evidence="1">
    <location>
        <begin position="322"/>
        <end position="342"/>
    </location>
</feature>
<feature type="region of interest" description="Disordered" evidence="2">
    <location>
        <begin position="372"/>
        <end position="391"/>
    </location>
</feature>
<dbReference type="EMBL" id="U00090">
    <property type="protein sequence ID" value="AAB92435.1"/>
    <property type="molecule type" value="Genomic_DNA"/>
</dbReference>
<dbReference type="RefSeq" id="NP_443812.1">
    <property type="nucleotide sequence ID" value="NC_000914.2"/>
</dbReference>
<dbReference type="RefSeq" id="WP_010875424.1">
    <property type="nucleotide sequence ID" value="NC_000914.2"/>
</dbReference>
<dbReference type="SMR" id="P55402"/>
<dbReference type="KEGG" id="rhi:NGR_a04140"/>
<dbReference type="PATRIC" id="fig|394.7.peg.435"/>
<dbReference type="eggNOG" id="COG3846">
    <property type="taxonomic scope" value="Bacteria"/>
</dbReference>
<dbReference type="HOGENOM" id="CLU_700002_0_0_5"/>
<dbReference type="OrthoDB" id="7304151at2"/>
<dbReference type="Proteomes" id="UP000001054">
    <property type="component" value="Plasmid pNGR234a"/>
</dbReference>
<dbReference type="GO" id="GO:0005886">
    <property type="term" value="C:plasma membrane"/>
    <property type="evidence" value="ECO:0007669"/>
    <property type="project" value="UniProtKB-SubCell"/>
</dbReference>
<dbReference type="GO" id="GO:0030255">
    <property type="term" value="P:protein secretion by the type IV secretion system"/>
    <property type="evidence" value="ECO:0007669"/>
    <property type="project" value="InterPro"/>
</dbReference>
<dbReference type="InterPro" id="IPR014150">
    <property type="entry name" value="Conjugal_tfr_TrbL"/>
</dbReference>
<dbReference type="InterPro" id="IPR007688">
    <property type="entry name" value="Conjugal_tfr_TrbL/VirB6"/>
</dbReference>
<dbReference type="NCBIfam" id="NF010415">
    <property type="entry name" value="PRK13841.1"/>
    <property type="match status" value="1"/>
</dbReference>
<dbReference type="NCBIfam" id="TIGR02783">
    <property type="entry name" value="TrbL_P"/>
    <property type="match status" value="1"/>
</dbReference>
<dbReference type="Pfam" id="PF04610">
    <property type="entry name" value="TrbL"/>
    <property type="match status" value="1"/>
</dbReference>
<proteinExistence type="inferred from homology"/>
<comment type="subcellular location">
    <subcellularLocation>
        <location evidence="3">Cell membrane</location>
        <topology evidence="3">Multi-pass membrane protein</topology>
    </subcellularLocation>
</comment>
<comment type="similarity">
    <text evidence="3">Belongs to the TrbL/VirB6 family.</text>
</comment>